<keyword id="KW-0131">Cell cycle</keyword>
<keyword id="KW-0132">Cell division</keyword>
<keyword id="KW-0963">Cytoplasm</keyword>
<keyword id="KW-0717">Septation</keyword>
<organism>
    <name type="scientific">Lactobacillus helveticus (strain DPC 4571)</name>
    <dbReference type="NCBI Taxonomy" id="405566"/>
    <lineage>
        <taxon>Bacteria</taxon>
        <taxon>Bacillati</taxon>
        <taxon>Bacillota</taxon>
        <taxon>Bacilli</taxon>
        <taxon>Lactobacillales</taxon>
        <taxon>Lactobacillaceae</taxon>
        <taxon>Lactobacillus</taxon>
    </lineage>
</organism>
<gene>
    <name evidence="1" type="primary">sepF</name>
    <name type="ordered locus">lhv_0860</name>
</gene>
<comment type="function">
    <text evidence="1">Cell division protein that is part of the divisome complex and is recruited early to the Z-ring. Probably stimulates Z-ring formation, perhaps through the cross-linking of FtsZ protofilaments. Its function overlaps with FtsA.</text>
</comment>
<comment type="subunit">
    <text evidence="1">Homodimer. Interacts with FtsZ.</text>
</comment>
<comment type="subcellular location">
    <subcellularLocation>
        <location evidence="1">Cytoplasm</location>
    </subcellularLocation>
    <text evidence="1">Localizes to the division site, in a FtsZ-dependent manner.</text>
</comment>
<comment type="similarity">
    <text evidence="1">Belongs to the SepF family.</text>
</comment>
<proteinExistence type="inferred from homology"/>
<sequence>MAFDKLGRFFGISNDDDELEKEEYTTSNKDENENLPLNSVSRDNIVSIKSGLNSAKSKIVLYEPRVYSDAKDVAQNLLNNKAVVINFSRMEDSSARRIVDFITGTVYALNGEIQRIGDKIFLATPPKFVTDGKISDLVDKKDNLS</sequence>
<reference key="1">
    <citation type="journal article" date="2008" name="J. Bacteriol.">
        <title>Genome sequence of Lactobacillus helveticus: an organism distinguished by selective gene loss and IS element expansion.</title>
        <authorList>
            <person name="Callanan M."/>
            <person name="Kaleta P."/>
            <person name="O'Callaghan J."/>
            <person name="O'Sullivan O."/>
            <person name="Jordan K."/>
            <person name="McAuliffe O."/>
            <person name="Sangrador-Vegas A."/>
            <person name="Slattery L."/>
            <person name="Fitzgerald G.F."/>
            <person name="Beresford T."/>
            <person name="Ross R.P."/>
        </authorList>
    </citation>
    <scope>NUCLEOTIDE SEQUENCE [LARGE SCALE GENOMIC DNA]</scope>
    <source>
        <strain>DPC 4571</strain>
    </source>
</reference>
<feature type="chain" id="PRO_0000334021" description="Cell division protein SepF">
    <location>
        <begin position="1"/>
        <end position="145"/>
    </location>
</feature>
<protein>
    <recommendedName>
        <fullName evidence="1">Cell division protein SepF</fullName>
    </recommendedName>
</protein>
<evidence type="ECO:0000255" key="1">
    <source>
        <dbReference type="HAMAP-Rule" id="MF_01197"/>
    </source>
</evidence>
<dbReference type="EMBL" id="CP000517">
    <property type="protein sequence ID" value="ABX26981.1"/>
    <property type="molecule type" value="Genomic_DNA"/>
</dbReference>
<dbReference type="RefSeq" id="WP_012211702.1">
    <property type="nucleotide sequence ID" value="NC_010080.1"/>
</dbReference>
<dbReference type="SMR" id="A8YUP3"/>
<dbReference type="KEGG" id="lhe:lhv_0860"/>
<dbReference type="eggNOG" id="COG1799">
    <property type="taxonomic scope" value="Bacteria"/>
</dbReference>
<dbReference type="HOGENOM" id="CLU_078499_4_1_9"/>
<dbReference type="Proteomes" id="UP000000790">
    <property type="component" value="Chromosome"/>
</dbReference>
<dbReference type="GO" id="GO:0005737">
    <property type="term" value="C:cytoplasm"/>
    <property type="evidence" value="ECO:0007669"/>
    <property type="project" value="UniProtKB-SubCell"/>
</dbReference>
<dbReference type="GO" id="GO:0000917">
    <property type="term" value="P:division septum assembly"/>
    <property type="evidence" value="ECO:0007669"/>
    <property type="project" value="UniProtKB-KW"/>
</dbReference>
<dbReference type="GO" id="GO:0043093">
    <property type="term" value="P:FtsZ-dependent cytokinesis"/>
    <property type="evidence" value="ECO:0007669"/>
    <property type="project" value="UniProtKB-UniRule"/>
</dbReference>
<dbReference type="Gene3D" id="3.30.110.150">
    <property type="entry name" value="SepF-like protein"/>
    <property type="match status" value="1"/>
</dbReference>
<dbReference type="HAMAP" id="MF_01197">
    <property type="entry name" value="SepF"/>
    <property type="match status" value="1"/>
</dbReference>
<dbReference type="InterPro" id="IPR023052">
    <property type="entry name" value="Cell_div_SepF"/>
</dbReference>
<dbReference type="InterPro" id="IPR007561">
    <property type="entry name" value="Cell_div_SepF/SepF-rel"/>
</dbReference>
<dbReference type="InterPro" id="IPR038594">
    <property type="entry name" value="SepF-like_sf"/>
</dbReference>
<dbReference type="PANTHER" id="PTHR35798">
    <property type="entry name" value="CELL DIVISION PROTEIN SEPF"/>
    <property type="match status" value="1"/>
</dbReference>
<dbReference type="PANTHER" id="PTHR35798:SF1">
    <property type="entry name" value="CELL DIVISION PROTEIN SEPF"/>
    <property type="match status" value="1"/>
</dbReference>
<dbReference type="Pfam" id="PF04472">
    <property type="entry name" value="SepF"/>
    <property type="match status" value="1"/>
</dbReference>
<name>SEPF_LACH4</name>
<accession>A8YUP3</accession>